<gene>
    <name evidence="1" type="primary">dapA</name>
    <name type="ordered locus">XCC1741</name>
</gene>
<sequence>MSLSGIITALATPFGPDGTLDLDAWRRLLEQQLHGGVQGIVVAGSTGEAAALSDDEYDTLVRAAVAQVAGRVQVLAGTGLSGTAKTIAQTRRAATLGAQYALVVTPPYVRPTQAGLLAHFQAVADNGGLPVVLYNVPGRTGCDLLPETVAALVSHPNIVGIKEARSEPERVAALVAMRSDRFVVLSGDDGSAAQSMLAGADGLVSVASNALPSAYRRLCDLARTGQHEAANAWDTRLSEYHSFCGIESNPIPVKALLQRAGIGHGLRLPLLPLSAAHQPAADRLAANAVALEALSSREMLAA</sequence>
<feature type="chain" id="PRO_0000103187" description="4-hydroxy-tetrahydrodipicolinate synthase">
    <location>
        <begin position="1"/>
        <end position="302"/>
    </location>
</feature>
<feature type="active site" description="Proton donor/acceptor" evidence="1">
    <location>
        <position position="134"/>
    </location>
</feature>
<feature type="active site" description="Schiff-base intermediate with substrate" evidence="1">
    <location>
        <position position="162"/>
    </location>
</feature>
<feature type="binding site" evidence="1">
    <location>
        <position position="46"/>
    </location>
    <ligand>
        <name>pyruvate</name>
        <dbReference type="ChEBI" id="CHEBI:15361"/>
    </ligand>
</feature>
<feature type="binding site" evidence="1">
    <location>
        <position position="204"/>
    </location>
    <ligand>
        <name>pyruvate</name>
        <dbReference type="ChEBI" id="CHEBI:15361"/>
    </ligand>
</feature>
<feature type="site" description="Part of a proton relay during catalysis" evidence="1">
    <location>
        <position position="45"/>
    </location>
</feature>
<feature type="site" description="Part of a proton relay during catalysis" evidence="1">
    <location>
        <position position="108"/>
    </location>
</feature>
<proteinExistence type="inferred from homology"/>
<organism>
    <name type="scientific">Xanthomonas campestris pv. campestris (strain ATCC 33913 / DSM 3586 / NCPPB 528 / LMG 568 / P 25)</name>
    <dbReference type="NCBI Taxonomy" id="190485"/>
    <lineage>
        <taxon>Bacteria</taxon>
        <taxon>Pseudomonadati</taxon>
        <taxon>Pseudomonadota</taxon>
        <taxon>Gammaproteobacteria</taxon>
        <taxon>Lysobacterales</taxon>
        <taxon>Lysobacteraceae</taxon>
        <taxon>Xanthomonas</taxon>
    </lineage>
</organism>
<evidence type="ECO:0000255" key="1">
    <source>
        <dbReference type="HAMAP-Rule" id="MF_00418"/>
    </source>
</evidence>
<evidence type="ECO:0000305" key="2"/>
<dbReference type="EC" id="4.3.3.7" evidence="1"/>
<dbReference type="EMBL" id="AE008922">
    <property type="protein sequence ID" value="AAM41032.1"/>
    <property type="molecule type" value="Genomic_DNA"/>
</dbReference>
<dbReference type="RefSeq" id="NP_637108.1">
    <property type="nucleotide sequence ID" value="NC_003902.1"/>
</dbReference>
<dbReference type="RefSeq" id="WP_011036915.1">
    <property type="nucleotide sequence ID" value="NC_003902.1"/>
</dbReference>
<dbReference type="SMR" id="Q8P9V6"/>
<dbReference type="STRING" id="190485.XCC1741"/>
<dbReference type="EnsemblBacteria" id="AAM41032">
    <property type="protein sequence ID" value="AAM41032"/>
    <property type="gene ID" value="XCC1741"/>
</dbReference>
<dbReference type="KEGG" id="xcc:XCC1741"/>
<dbReference type="PATRIC" id="fig|190485.4.peg.1856"/>
<dbReference type="eggNOG" id="COG0329">
    <property type="taxonomic scope" value="Bacteria"/>
</dbReference>
<dbReference type="HOGENOM" id="CLU_049343_7_1_6"/>
<dbReference type="OrthoDB" id="9782828at2"/>
<dbReference type="UniPathway" id="UPA00034">
    <property type="reaction ID" value="UER00017"/>
</dbReference>
<dbReference type="Proteomes" id="UP000001010">
    <property type="component" value="Chromosome"/>
</dbReference>
<dbReference type="GO" id="GO:0005829">
    <property type="term" value="C:cytosol"/>
    <property type="evidence" value="ECO:0000318"/>
    <property type="project" value="GO_Central"/>
</dbReference>
<dbReference type="GO" id="GO:0008840">
    <property type="term" value="F:4-hydroxy-tetrahydrodipicolinate synthase activity"/>
    <property type="evidence" value="ECO:0000318"/>
    <property type="project" value="GO_Central"/>
</dbReference>
<dbReference type="GO" id="GO:0019877">
    <property type="term" value="P:diaminopimelate biosynthetic process"/>
    <property type="evidence" value="ECO:0007669"/>
    <property type="project" value="UniProtKB-UniRule"/>
</dbReference>
<dbReference type="GO" id="GO:0009089">
    <property type="term" value="P:lysine biosynthetic process via diaminopimelate"/>
    <property type="evidence" value="ECO:0007669"/>
    <property type="project" value="UniProtKB-UniRule"/>
</dbReference>
<dbReference type="CDD" id="cd00950">
    <property type="entry name" value="DHDPS"/>
    <property type="match status" value="1"/>
</dbReference>
<dbReference type="Gene3D" id="3.20.20.70">
    <property type="entry name" value="Aldolase class I"/>
    <property type="match status" value="1"/>
</dbReference>
<dbReference type="HAMAP" id="MF_00418">
    <property type="entry name" value="DapA"/>
    <property type="match status" value="1"/>
</dbReference>
<dbReference type="InterPro" id="IPR013785">
    <property type="entry name" value="Aldolase_TIM"/>
</dbReference>
<dbReference type="InterPro" id="IPR005263">
    <property type="entry name" value="DapA"/>
</dbReference>
<dbReference type="InterPro" id="IPR002220">
    <property type="entry name" value="DapA-like"/>
</dbReference>
<dbReference type="InterPro" id="IPR020625">
    <property type="entry name" value="Schiff_base-form_aldolases_AS"/>
</dbReference>
<dbReference type="InterPro" id="IPR020624">
    <property type="entry name" value="Schiff_base-form_aldolases_CS"/>
</dbReference>
<dbReference type="NCBIfam" id="TIGR00674">
    <property type="entry name" value="dapA"/>
    <property type="match status" value="1"/>
</dbReference>
<dbReference type="PANTHER" id="PTHR12128:SF66">
    <property type="entry name" value="4-HYDROXY-2-OXOGLUTARATE ALDOLASE, MITOCHONDRIAL"/>
    <property type="match status" value="1"/>
</dbReference>
<dbReference type="PANTHER" id="PTHR12128">
    <property type="entry name" value="DIHYDRODIPICOLINATE SYNTHASE"/>
    <property type="match status" value="1"/>
</dbReference>
<dbReference type="Pfam" id="PF00701">
    <property type="entry name" value="DHDPS"/>
    <property type="match status" value="1"/>
</dbReference>
<dbReference type="PIRSF" id="PIRSF001365">
    <property type="entry name" value="DHDPS"/>
    <property type="match status" value="1"/>
</dbReference>
<dbReference type="PRINTS" id="PR00146">
    <property type="entry name" value="DHPICSNTHASE"/>
</dbReference>
<dbReference type="SMART" id="SM01130">
    <property type="entry name" value="DHDPS"/>
    <property type="match status" value="1"/>
</dbReference>
<dbReference type="SUPFAM" id="SSF51569">
    <property type="entry name" value="Aldolase"/>
    <property type="match status" value="1"/>
</dbReference>
<dbReference type="PROSITE" id="PS00665">
    <property type="entry name" value="DHDPS_1"/>
    <property type="match status" value="1"/>
</dbReference>
<dbReference type="PROSITE" id="PS00666">
    <property type="entry name" value="DHDPS_2"/>
    <property type="match status" value="1"/>
</dbReference>
<protein>
    <recommendedName>
        <fullName evidence="1">4-hydroxy-tetrahydrodipicolinate synthase</fullName>
        <shortName evidence="1">HTPA synthase</shortName>
        <ecNumber evidence="1">4.3.3.7</ecNumber>
    </recommendedName>
</protein>
<keyword id="KW-0028">Amino-acid biosynthesis</keyword>
<keyword id="KW-0963">Cytoplasm</keyword>
<keyword id="KW-0220">Diaminopimelate biosynthesis</keyword>
<keyword id="KW-0456">Lyase</keyword>
<keyword id="KW-0457">Lysine biosynthesis</keyword>
<keyword id="KW-1185">Reference proteome</keyword>
<keyword id="KW-0704">Schiff base</keyword>
<reference key="1">
    <citation type="journal article" date="2002" name="Nature">
        <title>Comparison of the genomes of two Xanthomonas pathogens with differing host specificities.</title>
        <authorList>
            <person name="da Silva A.C.R."/>
            <person name="Ferro J.A."/>
            <person name="Reinach F.C."/>
            <person name="Farah C.S."/>
            <person name="Furlan L.R."/>
            <person name="Quaggio R.B."/>
            <person name="Monteiro-Vitorello C.B."/>
            <person name="Van Sluys M.A."/>
            <person name="Almeida N.F. Jr."/>
            <person name="Alves L.M.C."/>
            <person name="do Amaral A.M."/>
            <person name="Bertolini M.C."/>
            <person name="Camargo L.E.A."/>
            <person name="Camarotte G."/>
            <person name="Cannavan F."/>
            <person name="Cardozo J."/>
            <person name="Chambergo F."/>
            <person name="Ciapina L.P."/>
            <person name="Cicarelli R.M.B."/>
            <person name="Coutinho L.L."/>
            <person name="Cursino-Santos J.R."/>
            <person name="El-Dorry H."/>
            <person name="Faria J.B."/>
            <person name="Ferreira A.J.S."/>
            <person name="Ferreira R.C.C."/>
            <person name="Ferro M.I.T."/>
            <person name="Formighieri E.F."/>
            <person name="Franco M.C."/>
            <person name="Greggio C.C."/>
            <person name="Gruber A."/>
            <person name="Katsuyama A.M."/>
            <person name="Kishi L.T."/>
            <person name="Leite R.P."/>
            <person name="Lemos E.G.M."/>
            <person name="Lemos M.V.F."/>
            <person name="Locali E.C."/>
            <person name="Machado M.A."/>
            <person name="Madeira A.M.B.N."/>
            <person name="Martinez-Rossi N.M."/>
            <person name="Martins E.C."/>
            <person name="Meidanis J."/>
            <person name="Menck C.F.M."/>
            <person name="Miyaki C.Y."/>
            <person name="Moon D.H."/>
            <person name="Moreira L.M."/>
            <person name="Novo M.T.M."/>
            <person name="Okura V.K."/>
            <person name="Oliveira M.C."/>
            <person name="Oliveira V.R."/>
            <person name="Pereira H.A."/>
            <person name="Rossi A."/>
            <person name="Sena J.A.D."/>
            <person name="Silva C."/>
            <person name="de Souza R.F."/>
            <person name="Spinola L.A.F."/>
            <person name="Takita M.A."/>
            <person name="Tamura R.E."/>
            <person name="Teixeira E.C."/>
            <person name="Tezza R.I.D."/>
            <person name="Trindade dos Santos M."/>
            <person name="Truffi D."/>
            <person name="Tsai S.M."/>
            <person name="White F.F."/>
            <person name="Setubal J.C."/>
            <person name="Kitajima J.P."/>
        </authorList>
    </citation>
    <scope>NUCLEOTIDE SEQUENCE [LARGE SCALE GENOMIC DNA]</scope>
    <source>
        <strain>ATCC 33913 / DSM 3586 / NCPPB 528 / LMG 568 / P 25</strain>
    </source>
</reference>
<comment type="function">
    <text evidence="1">Catalyzes the condensation of (S)-aspartate-beta-semialdehyde [(S)-ASA] and pyruvate to 4-hydroxy-tetrahydrodipicolinate (HTPA).</text>
</comment>
<comment type="catalytic activity">
    <reaction evidence="1">
        <text>L-aspartate 4-semialdehyde + pyruvate = (2S,4S)-4-hydroxy-2,3,4,5-tetrahydrodipicolinate + H2O + H(+)</text>
        <dbReference type="Rhea" id="RHEA:34171"/>
        <dbReference type="ChEBI" id="CHEBI:15361"/>
        <dbReference type="ChEBI" id="CHEBI:15377"/>
        <dbReference type="ChEBI" id="CHEBI:15378"/>
        <dbReference type="ChEBI" id="CHEBI:67139"/>
        <dbReference type="ChEBI" id="CHEBI:537519"/>
        <dbReference type="EC" id="4.3.3.7"/>
    </reaction>
</comment>
<comment type="pathway">
    <text evidence="1">Amino-acid biosynthesis; L-lysine biosynthesis via DAP pathway; (S)-tetrahydrodipicolinate from L-aspartate: step 3/4.</text>
</comment>
<comment type="subunit">
    <text evidence="1">Homotetramer; dimer of dimers.</text>
</comment>
<comment type="subcellular location">
    <subcellularLocation>
        <location evidence="1">Cytoplasm</location>
    </subcellularLocation>
</comment>
<comment type="similarity">
    <text evidence="1">Belongs to the DapA family.</text>
</comment>
<comment type="caution">
    <text evidence="2">Was originally thought to be a dihydrodipicolinate synthase (DHDPS), catalyzing the condensation of (S)-aspartate-beta-semialdehyde [(S)-ASA] and pyruvate to dihydrodipicolinate (DHDP). However, it was shown in E.coli that the product of the enzymatic reaction is not dihydrodipicolinate but in fact (4S)-4-hydroxy-2,3,4,5-tetrahydro-(2S)-dipicolinic acid (HTPA), and that the consecutive dehydration reaction leading to DHDP is not spontaneous but catalyzed by DapB.</text>
</comment>
<name>DAPA_XANCP</name>
<accession>Q8P9V6</accession>